<accession>A0A023PXF8</accession>
<organism>
    <name type="scientific">Saccharomyces cerevisiae (strain ATCC 204508 / S288c)</name>
    <name type="common">Baker's yeast</name>
    <dbReference type="NCBI Taxonomy" id="559292"/>
    <lineage>
        <taxon>Eukaryota</taxon>
        <taxon>Fungi</taxon>
        <taxon>Dikarya</taxon>
        <taxon>Ascomycota</taxon>
        <taxon>Saccharomycotina</taxon>
        <taxon>Saccharomycetes</taxon>
        <taxon>Saccharomycetales</taxon>
        <taxon>Saccharomycetaceae</taxon>
        <taxon>Saccharomyces</taxon>
    </lineage>
</organism>
<evidence type="ECO:0000255" key="1"/>
<evidence type="ECO:0000305" key="2"/>
<evidence type="ECO:0000305" key="3">
    <source>
    </source>
</evidence>
<evidence type="ECO:0000312" key="4">
    <source>
        <dbReference type="SGD" id="S000028791"/>
    </source>
</evidence>
<protein>
    <recommendedName>
        <fullName evidence="2">Putative uncharacterized membrane protein YIL066W-A</fullName>
    </recommendedName>
</protein>
<reference key="1">
    <citation type="journal article" date="1997" name="Nature">
        <title>The nucleotide sequence of Saccharomyces cerevisiae chromosome IX.</title>
        <authorList>
            <person name="Churcher C.M."/>
            <person name="Bowman S."/>
            <person name="Badcock K."/>
            <person name="Bankier A.T."/>
            <person name="Brown D."/>
            <person name="Chillingworth T."/>
            <person name="Connor R."/>
            <person name="Devlin K."/>
            <person name="Gentles S."/>
            <person name="Hamlin N."/>
            <person name="Harris D.E."/>
            <person name="Horsnell T."/>
            <person name="Hunt S."/>
            <person name="Jagels K."/>
            <person name="Jones M."/>
            <person name="Lye G."/>
            <person name="Moule S."/>
            <person name="Odell C."/>
            <person name="Pearson D."/>
            <person name="Rajandream M.A."/>
            <person name="Rice P."/>
            <person name="Rowley N."/>
            <person name="Skelton J."/>
            <person name="Smith V."/>
            <person name="Walsh S.V."/>
            <person name="Whitehead S."/>
            <person name="Barrell B.G."/>
        </authorList>
    </citation>
    <scope>NUCLEOTIDE SEQUENCE [LARGE SCALE GENOMIC DNA]</scope>
    <source>
        <strain>ATCC 204508 / S288c</strain>
    </source>
</reference>
<reference key="2">
    <citation type="journal article" date="2014" name="G3 (Bethesda)">
        <title>The reference genome sequence of Saccharomyces cerevisiae: Then and now.</title>
        <authorList>
            <person name="Engel S.R."/>
            <person name="Dietrich F.S."/>
            <person name="Fisk D.G."/>
            <person name="Binkley G."/>
            <person name="Balakrishnan R."/>
            <person name="Costanzo M.C."/>
            <person name="Dwight S.S."/>
            <person name="Hitz B.C."/>
            <person name="Karra K."/>
            <person name="Nash R.S."/>
            <person name="Weng S."/>
            <person name="Wong E.D."/>
            <person name="Lloyd P."/>
            <person name="Skrzypek M.S."/>
            <person name="Miyasato S.R."/>
            <person name="Simison M."/>
            <person name="Cherry J.M."/>
        </authorList>
    </citation>
    <scope>GENOME REANNOTATION</scope>
    <source>
        <strain>ATCC 204508 / S288c</strain>
    </source>
</reference>
<dbReference type="EMBL" id="KJ412271">
    <property type="protein sequence ID" value="AHX39314.1"/>
    <property type="molecule type" value="Genomic_DNA"/>
</dbReference>
<dbReference type="PaxDb" id="4932-YIL066W-A"/>
<dbReference type="EnsemblFungi" id="YIL066W-A_mRNA">
    <property type="protein sequence ID" value="YIL066W-A"/>
    <property type="gene ID" value="YIL066W-A"/>
</dbReference>
<dbReference type="AGR" id="SGD:S000028791"/>
<dbReference type="SGD" id="S000028791">
    <property type="gene designation" value="YIL066W-A"/>
</dbReference>
<dbReference type="HOGENOM" id="CLU_1769180_0_0_1"/>
<dbReference type="GO" id="GO:0016020">
    <property type="term" value="C:membrane"/>
    <property type="evidence" value="ECO:0007669"/>
    <property type="project" value="UniProtKB-SubCell"/>
</dbReference>
<gene>
    <name evidence="4" type="ordered locus">YIL066W-A</name>
</gene>
<proteinExistence type="uncertain"/>
<feature type="chain" id="PRO_0000431035" description="Putative uncharacterized membrane protein YIL066W-A">
    <location>
        <begin position="1"/>
        <end position="147"/>
    </location>
</feature>
<feature type="transmembrane region" description="Helical" evidence="1">
    <location>
        <begin position="13"/>
        <end position="35"/>
    </location>
</feature>
<comment type="subcellular location">
    <subcellularLocation>
        <location evidence="1">Membrane</location>
        <topology evidence="1">Single-pass membrane protein</topology>
    </subcellularLocation>
</comment>
<comment type="miscellaneous">
    <text evidence="2">Partially overlaps YIL067C.</text>
</comment>
<comment type="caution">
    <text evidence="3">Product of a dubious gene prediction unlikely to encode a functional protein. Because of that it is not part of the S.cerevisiae S288c complete/reference proteome set.</text>
</comment>
<sequence>MRIQKQQYTISSNSRINLLGILVLNVVCGKSSIFFSHPQRLGKLGGSSLGSTGPFQTLSINFCIGCFLFNSNHFDLLFSLPSSSSILSMSVLEKFCSCIDSVTRCCPSQSLETPGSVASHVVLALSSKCTPIQFNAKWSISHKSNTG</sequence>
<name>YI066_YEAST</name>
<keyword id="KW-0472">Membrane</keyword>
<keyword id="KW-0812">Transmembrane</keyword>
<keyword id="KW-1133">Transmembrane helix</keyword>